<comment type="function">
    <text evidence="1">Cell wall formation. Catalyzes the addition of glutamate to the nucleotide precursor UDP-N-acetylmuramoyl-L-alanine (UMA).</text>
</comment>
<comment type="catalytic activity">
    <reaction evidence="1">
        <text>UDP-N-acetyl-alpha-D-muramoyl-L-alanine + D-glutamate + ATP = UDP-N-acetyl-alpha-D-muramoyl-L-alanyl-D-glutamate + ADP + phosphate + H(+)</text>
        <dbReference type="Rhea" id="RHEA:16429"/>
        <dbReference type="ChEBI" id="CHEBI:15378"/>
        <dbReference type="ChEBI" id="CHEBI:29986"/>
        <dbReference type="ChEBI" id="CHEBI:30616"/>
        <dbReference type="ChEBI" id="CHEBI:43474"/>
        <dbReference type="ChEBI" id="CHEBI:83898"/>
        <dbReference type="ChEBI" id="CHEBI:83900"/>
        <dbReference type="ChEBI" id="CHEBI:456216"/>
        <dbReference type="EC" id="6.3.2.9"/>
    </reaction>
</comment>
<comment type="pathway">
    <text evidence="1">Cell wall biogenesis; peptidoglycan biosynthesis.</text>
</comment>
<comment type="subcellular location">
    <subcellularLocation>
        <location evidence="1">Cytoplasm</location>
    </subcellularLocation>
</comment>
<comment type="similarity">
    <text evidence="1">Belongs to the MurCDEF family.</text>
</comment>
<comment type="sequence caution" evidence="2">
    <conflict type="erroneous initiation">
        <sequence resource="EMBL-CDS" id="ABA48716"/>
    </conflict>
</comment>
<keyword id="KW-0067">ATP-binding</keyword>
<keyword id="KW-0131">Cell cycle</keyword>
<keyword id="KW-0132">Cell division</keyword>
<keyword id="KW-0133">Cell shape</keyword>
<keyword id="KW-0961">Cell wall biogenesis/degradation</keyword>
<keyword id="KW-0963">Cytoplasm</keyword>
<keyword id="KW-0436">Ligase</keyword>
<keyword id="KW-0547">Nucleotide-binding</keyword>
<keyword id="KW-0573">Peptidoglycan synthesis</keyword>
<sequence length="504" mass="52549">MFGDRQRPMVLVLGLGESGLAIARWCARHGCRLRVADTRETPPNLAALTAAGVDFEFVGGAFSPALVDGGIELVALSPGLSPLAEDLAPLVAAARERGIPVWGELEFFAQALAALGANGYAPKVIAITGTNGKTTTTSLAGLLCERAGKKVAVAGNISPAMLDKLTEAIDAAALPDVWVLELSSFQLDTAHTFAPDAATILNITQDHLDWHGGFAAYAAAKGRVFGPRTVRVLNRDDAEVMRFAPPAAAADAPRAVTFGLNEPAADGDYGLLRENGIAWLVEAIDRDGADAPAAPSRRRKQEAANPPDIALKRLMPADALRIRGLHNAANALAAYALARAIGLPAAPLLHGLREYRGEPHRVEVIATLDGVDYVDDSKGTNVGATVAALDGLAQRAVLIAGGDGKGQDFEPLAAPVARWCRAVMLIGRDAPALREALADTGVPLADHATLEAAVRAASALAQPGDAVLLSPACASLDMFRNYAHRADVFRSAVEDIALEKGTTL</sequence>
<protein>
    <recommendedName>
        <fullName evidence="1">UDP-N-acetylmuramoylalanine--D-glutamate ligase</fullName>
        <ecNumber evidence="1">6.3.2.9</ecNumber>
    </recommendedName>
    <alternativeName>
        <fullName evidence="1">D-glutamic acid-adding enzyme</fullName>
    </alternativeName>
    <alternativeName>
        <fullName evidence="1">UDP-N-acetylmuramoyl-L-alanyl-D-glutamate synthetase</fullName>
    </alternativeName>
</protein>
<name>MURD_BURP1</name>
<dbReference type="EC" id="6.3.2.9" evidence="1"/>
<dbReference type="EMBL" id="CP000124">
    <property type="protein sequence ID" value="ABA48716.1"/>
    <property type="status" value="ALT_INIT"/>
    <property type="molecule type" value="Genomic_DNA"/>
</dbReference>
<dbReference type="RefSeq" id="WP_004203798.1">
    <property type="nucleotide sequence ID" value="NC_007434.1"/>
</dbReference>
<dbReference type="SMR" id="Q3JND6"/>
<dbReference type="EnsemblBacteria" id="ABA48716">
    <property type="protein sequence ID" value="ABA48716"/>
    <property type="gene ID" value="BURPS1710b_3547"/>
</dbReference>
<dbReference type="GeneID" id="93061629"/>
<dbReference type="KEGG" id="bpm:BURPS1710b_3547"/>
<dbReference type="HOGENOM" id="CLU_032540_1_1_4"/>
<dbReference type="UniPathway" id="UPA00219"/>
<dbReference type="Proteomes" id="UP000002700">
    <property type="component" value="Chromosome I"/>
</dbReference>
<dbReference type="GO" id="GO:0005737">
    <property type="term" value="C:cytoplasm"/>
    <property type="evidence" value="ECO:0007669"/>
    <property type="project" value="UniProtKB-SubCell"/>
</dbReference>
<dbReference type="GO" id="GO:0005524">
    <property type="term" value="F:ATP binding"/>
    <property type="evidence" value="ECO:0007669"/>
    <property type="project" value="UniProtKB-UniRule"/>
</dbReference>
<dbReference type="GO" id="GO:0008764">
    <property type="term" value="F:UDP-N-acetylmuramoylalanine-D-glutamate ligase activity"/>
    <property type="evidence" value="ECO:0007669"/>
    <property type="project" value="UniProtKB-UniRule"/>
</dbReference>
<dbReference type="GO" id="GO:0051301">
    <property type="term" value="P:cell division"/>
    <property type="evidence" value="ECO:0007669"/>
    <property type="project" value="UniProtKB-KW"/>
</dbReference>
<dbReference type="GO" id="GO:0071555">
    <property type="term" value="P:cell wall organization"/>
    <property type="evidence" value="ECO:0007669"/>
    <property type="project" value="UniProtKB-KW"/>
</dbReference>
<dbReference type="GO" id="GO:0009252">
    <property type="term" value="P:peptidoglycan biosynthetic process"/>
    <property type="evidence" value="ECO:0007669"/>
    <property type="project" value="UniProtKB-UniRule"/>
</dbReference>
<dbReference type="GO" id="GO:0008360">
    <property type="term" value="P:regulation of cell shape"/>
    <property type="evidence" value="ECO:0007669"/>
    <property type="project" value="UniProtKB-KW"/>
</dbReference>
<dbReference type="Gene3D" id="3.90.190.20">
    <property type="entry name" value="Mur ligase, C-terminal domain"/>
    <property type="match status" value="1"/>
</dbReference>
<dbReference type="Gene3D" id="3.40.1190.10">
    <property type="entry name" value="Mur-like, catalytic domain"/>
    <property type="match status" value="1"/>
</dbReference>
<dbReference type="Gene3D" id="3.40.50.720">
    <property type="entry name" value="NAD(P)-binding Rossmann-like Domain"/>
    <property type="match status" value="1"/>
</dbReference>
<dbReference type="HAMAP" id="MF_00639">
    <property type="entry name" value="MurD"/>
    <property type="match status" value="1"/>
</dbReference>
<dbReference type="InterPro" id="IPR036565">
    <property type="entry name" value="Mur-like_cat_sf"/>
</dbReference>
<dbReference type="InterPro" id="IPR004101">
    <property type="entry name" value="Mur_ligase_C"/>
</dbReference>
<dbReference type="InterPro" id="IPR036615">
    <property type="entry name" value="Mur_ligase_C_dom_sf"/>
</dbReference>
<dbReference type="InterPro" id="IPR013221">
    <property type="entry name" value="Mur_ligase_cen"/>
</dbReference>
<dbReference type="InterPro" id="IPR005762">
    <property type="entry name" value="MurD"/>
</dbReference>
<dbReference type="NCBIfam" id="TIGR01087">
    <property type="entry name" value="murD"/>
    <property type="match status" value="1"/>
</dbReference>
<dbReference type="PANTHER" id="PTHR43692">
    <property type="entry name" value="UDP-N-ACETYLMURAMOYLALANINE--D-GLUTAMATE LIGASE"/>
    <property type="match status" value="1"/>
</dbReference>
<dbReference type="PANTHER" id="PTHR43692:SF1">
    <property type="entry name" value="UDP-N-ACETYLMURAMOYLALANINE--D-GLUTAMATE LIGASE"/>
    <property type="match status" value="1"/>
</dbReference>
<dbReference type="Pfam" id="PF02875">
    <property type="entry name" value="Mur_ligase_C"/>
    <property type="match status" value="1"/>
</dbReference>
<dbReference type="Pfam" id="PF08245">
    <property type="entry name" value="Mur_ligase_M"/>
    <property type="match status" value="1"/>
</dbReference>
<dbReference type="Pfam" id="PF21799">
    <property type="entry name" value="MurD-like_N"/>
    <property type="match status" value="1"/>
</dbReference>
<dbReference type="SUPFAM" id="SSF51984">
    <property type="entry name" value="MurCD N-terminal domain"/>
    <property type="match status" value="1"/>
</dbReference>
<dbReference type="SUPFAM" id="SSF53623">
    <property type="entry name" value="MurD-like peptide ligases, catalytic domain"/>
    <property type="match status" value="1"/>
</dbReference>
<dbReference type="SUPFAM" id="SSF53244">
    <property type="entry name" value="MurD-like peptide ligases, peptide-binding domain"/>
    <property type="match status" value="1"/>
</dbReference>
<accession>Q3JND6</accession>
<gene>
    <name evidence="1" type="primary">murD</name>
    <name type="ordered locus">BURPS1710b_3547</name>
</gene>
<organism>
    <name type="scientific">Burkholderia pseudomallei (strain 1710b)</name>
    <dbReference type="NCBI Taxonomy" id="320372"/>
    <lineage>
        <taxon>Bacteria</taxon>
        <taxon>Pseudomonadati</taxon>
        <taxon>Pseudomonadota</taxon>
        <taxon>Betaproteobacteria</taxon>
        <taxon>Burkholderiales</taxon>
        <taxon>Burkholderiaceae</taxon>
        <taxon>Burkholderia</taxon>
        <taxon>pseudomallei group</taxon>
    </lineage>
</organism>
<reference key="1">
    <citation type="journal article" date="2010" name="Genome Biol. Evol.">
        <title>Continuing evolution of Burkholderia mallei through genome reduction and large-scale rearrangements.</title>
        <authorList>
            <person name="Losada L."/>
            <person name="Ronning C.M."/>
            <person name="DeShazer D."/>
            <person name="Woods D."/>
            <person name="Fedorova N."/>
            <person name="Kim H.S."/>
            <person name="Shabalina S.A."/>
            <person name="Pearson T.R."/>
            <person name="Brinkac L."/>
            <person name="Tan P."/>
            <person name="Nandi T."/>
            <person name="Crabtree J."/>
            <person name="Badger J."/>
            <person name="Beckstrom-Sternberg S."/>
            <person name="Saqib M."/>
            <person name="Schutzer S.E."/>
            <person name="Keim P."/>
            <person name="Nierman W.C."/>
        </authorList>
    </citation>
    <scope>NUCLEOTIDE SEQUENCE [LARGE SCALE GENOMIC DNA]</scope>
    <source>
        <strain>1710b</strain>
    </source>
</reference>
<evidence type="ECO:0000255" key="1">
    <source>
        <dbReference type="HAMAP-Rule" id="MF_00639"/>
    </source>
</evidence>
<evidence type="ECO:0000305" key="2"/>
<feature type="chain" id="PRO_0000257171" description="UDP-N-acetylmuramoylalanine--D-glutamate ligase">
    <location>
        <begin position="1"/>
        <end position="504"/>
    </location>
</feature>
<feature type="binding site" evidence="1">
    <location>
        <begin position="129"/>
        <end position="135"/>
    </location>
    <ligand>
        <name>ATP</name>
        <dbReference type="ChEBI" id="CHEBI:30616"/>
    </ligand>
</feature>
<proteinExistence type="inferred from homology"/>